<protein>
    <recommendedName>
        <fullName evidence="1">5-methyltetrahydropteroyltriglutamate--homocysteine methyltransferase</fullName>
        <ecNumber evidence="1">2.1.1.14</ecNumber>
    </recommendedName>
    <alternativeName>
        <fullName evidence="1">Cobalamin-independent methionine synthase</fullName>
    </alternativeName>
    <alternativeName>
        <fullName evidence="1">Methionine synthase, vitamin-B12 independent isozyme</fullName>
    </alternativeName>
</protein>
<proteinExistence type="inferred from homology"/>
<sequence length="776" mass="85798">MTTIHTLGYPRIGAQRELKFALESFWKGASSEDDLRATGSALRARHWAAQRDAGLDFVTVGDFAWYDQVQQTAALLGAVPTRYGFDPAQLTLAQSFVLARGNADHAAMEMTKWFDTNYHYLVPELTPDLLDRQWGPGTEWLFDEVREAQALGHRVKVVLLGPITFLHLAKARHGLADKLALLPQVLQAYTAVLQRLAALKVEWVQIDEPALVLDLPQAWVDAFGPAHQALAAAKGPKRLLATYFEAASHHAALIQSLPVDGVHLDLVRAPDQVAAFAPWSADKVLSVGVVDGRNIWRTDLTRVLAHLTPLAQALGDRLWIAPSCSLLHVPVDLSAETKLDDELKGWLAFARQKLDELAVIKRALVEGPAAVQGELDDNRIAIASRTQSRRVHNAGVKKRVAAIRAADAVRAAPYPARADAQQARLNLPLLPTTTIGSFPQTPEIRRARAQHKRGDLPALDYLQRMRTEIADVVRRQEALGLDMLVHGEAERNDMVEYFGELLWGYAFTANGWVQSYGSRCVKPPVIYGDVYRPEAMTVEWSKYAQSLTSKPMKGMLTGPVTMLQWSFVRDDQPREQTALQIALALRDEVCDLEAAGIAAIQIDEPAFREGLPLRASDVPTYLEWAARAFRVSASGVRNDTQIHTHMCYSEFNDILPAIASMDADVITIETSRSNMELLDAFAEFAYPNEIGPGVYDIHSPRVPRVDEMESLLDKAAQVVPVQRLWVNPDCGLKTRGWPEVEAALQGIVEATHRLRAKHANAKRAGSKAAHVEGEMA</sequence>
<organism>
    <name type="scientific">Ralstonia pickettii (strain 12J)</name>
    <dbReference type="NCBI Taxonomy" id="402626"/>
    <lineage>
        <taxon>Bacteria</taxon>
        <taxon>Pseudomonadati</taxon>
        <taxon>Pseudomonadota</taxon>
        <taxon>Betaproteobacteria</taxon>
        <taxon>Burkholderiales</taxon>
        <taxon>Burkholderiaceae</taxon>
        <taxon>Ralstonia</taxon>
    </lineage>
</organism>
<reference key="1">
    <citation type="submission" date="2008-05" db="EMBL/GenBank/DDBJ databases">
        <title>Complete sequence of chromosome 2 of Ralstonia pickettii 12J.</title>
        <authorList>
            <person name="Lucas S."/>
            <person name="Copeland A."/>
            <person name="Lapidus A."/>
            <person name="Glavina del Rio T."/>
            <person name="Dalin E."/>
            <person name="Tice H."/>
            <person name="Bruce D."/>
            <person name="Goodwin L."/>
            <person name="Pitluck S."/>
            <person name="Meincke L."/>
            <person name="Brettin T."/>
            <person name="Detter J.C."/>
            <person name="Han C."/>
            <person name="Kuske C.R."/>
            <person name="Schmutz J."/>
            <person name="Larimer F."/>
            <person name="Land M."/>
            <person name="Hauser L."/>
            <person name="Kyrpides N."/>
            <person name="Mikhailova N."/>
            <person name="Marsh T."/>
            <person name="Richardson P."/>
        </authorList>
    </citation>
    <scope>NUCLEOTIDE SEQUENCE [LARGE SCALE GENOMIC DNA]</scope>
    <source>
        <strain>12J</strain>
    </source>
</reference>
<gene>
    <name evidence="1" type="primary">metE</name>
    <name type="ordered locus">Rpic_4542</name>
</gene>
<evidence type="ECO:0000255" key="1">
    <source>
        <dbReference type="HAMAP-Rule" id="MF_00172"/>
    </source>
</evidence>
<comment type="function">
    <text evidence="1">Catalyzes the transfer of a methyl group from 5-methyltetrahydrofolate to homocysteine resulting in methionine formation.</text>
</comment>
<comment type="catalytic activity">
    <reaction evidence="1">
        <text>5-methyltetrahydropteroyltri-L-glutamate + L-homocysteine = tetrahydropteroyltri-L-glutamate + L-methionine</text>
        <dbReference type="Rhea" id="RHEA:21196"/>
        <dbReference type="ChEBI" id="CHEBI:57844"/>
        <dbReference type="ChEBI" id="CHEBI:58140"/>
        <dbReference type="ChEBI" id="CHEBI:58199"/>
        <dbReference type="ChEBI" id="CHEBI:58207"/>
        <dbReference type="EC" id="2.1.1.14"/>
    </reaction>
</comment>
<comment type="cofactor">
    <cofactor evidence="1">
        <name>Zn(2+)</name>
        <dbReference type="ChEBI" id="CHEBI:29105"/>
    </cofactor>
    <text evidence="1">Binds 1 zinc ion per subunit.</text>
</comment>
<comment type="pathway">
    <text evidence="1">Amino-acid biosynthesis; L-methionine biosynthesis via de novo pathway; L-methionine from L-homocysteine (MetE route): step 1/1.</text>
</comment>
<comment type="similarity">
    <text evidence="1">Belongs to the vitamin-B12 independent methionine synthase family.</text>
</comment>
<name>METE_RALPJ</name>
<keyword id="KW-0028">Amino-acid biosynthesis</keyword>
<keyword id="KW-0479">Metal-binding</keyword>
<keyword id="KW-0486">Methionine biosynthesis</keyword>
<keyword id="KW-0489">Methyltransferase</keyword>
<keyword id="KW-0677">Repeat</keyword>
<keyword id="KW-0808">Transferase</keyword>
<keyword id="KW-0862">Zinc</keyword>
<accession>B2UJ81</accession>
<feature type="chain" id="PRO_1000097834" description="5-methyltetrahydropteroyltriglutamate--homocysteine methyltransferase">
    <location>
        <begin position="1"/>
        <end position="776"/>
    </location>
</feature>
<feature type="active site" description="Proton donor" evidence="1">
    <location>
        <position position="698"/>
    </location>
</feature>
<feature type="binding site" evidence="1">
    <location>
        <begin position="16"/>
        <end position="19"/>
    </location>
    <ligand>
        <name>5-methyltetrahydropteroyltri-L-glutamate</name>
        <dbReference type="ChEBI" id="CHEBI:58207"/>
    </ligand>
</feature>
<feature type="binding site" evidence="1">
    <location>
        <position position="112"/>
    </location>
    <ligand>
        <name>5-methyltetrahydropteroyltri-L-glutamate</name>
        <dbReference type="ChEBI" id="CHEBI:58207"/>
    </ligand>
</feature>
<feature type="binding site" evidence="1">
    <location>
        <begin position="435"/>
        <end position="437"/>
    </location>
    <ligand>
        <name>L-homocysteine</name>
        <dbReference type="ChEBI" id="CHEBI:58199"/>
    </ligand>
</feature>
<feature type="binding site" evidence="1">
    <location>
        <begin position="435"/>
        <end position="437"/>
    </location>
    <ligand>
        <name>L-methionine</name>
        <dbReference type="ChEBI" id="CHEBI:57844"/>
    </ligand>
</feature>
<feature type="binding site" evidence="1">
    <location>
        <position position="488"/>
    </location>
    <ligand>
        <name>L-homocysteine</name>
        <dbReference type="ChEBI" id="CHEBI:58199"/>
    </ligand>
</feature>
<feature type="binding site" evidence="1">
    <location>
        <position position="488"/>
    </location>
    <ligand>
        <name>L-methionine</name>
        <dbReference type="ChEBI" id="CHEBI:57844"/>
    </ligand>
</feature>
<feature type="binding site" evidence="1">
    <location>
        <begin position="519"/>
        <end position="520"/>
    </location>
    <ligand>
        <name>5-methyltetrahydropteroyltri-L-glutamate</name>
        <dbReference type="ChEBI" id="CHEBI:58207"/>
    </ligand>
</feature>
<feature type="binding site" evidence="1">
    <location>
        <position position="565"/>
    </location>
    <ligand>
        <name>5-methyltetrahydropteroyltri-L-glutamate</name>
        <dbReference type="ChEBI" id="CHEBI:58207"/>
    </ligand>
</feature>
<feature type="binding site" evidence="1">
    <location>
        <position position="603"/>
    </location>
    <ligand>
        <name>L-homocysteine</name>
        <dbReference type="ChEBI" id="CHEBI:58199"/>
    </ligand>
</feature>
<feature type="binding site" evidence="1">
    <location>
        <position position="603"/>
    </location>
    <ligand>
        <name>L-methionine</name>
        <dbReference type="ChEBI" id="CHEBI:57844"/>
    </ligand>
</feature>
<feature type="binding site" evidence="1">
    <location>
        <position position="609"/>
    </location>
    <ligand>
        <name>5-methyltetrahydropteroyltri-L-glutamate</name>
        <dbReference type="ChEBI" id="CHEBI:58207"/>
    </ligand>
</feature>
<feature type="binding site" evidence="1">
    <location>
        <position position="645"/>
    </location>
    <ligand>
        <name>Zn(2+)</name>
        <dbReference type="ChEBI" id="CHEBI:29105"/>
        <note>catalytic</note>
    </ligand>
</feature>
<feature type="binding site" evidence="1">
    <location>
        <position position="647"/>
    </location>
    <ligand>
        <name>Zn(2+)</name>
        <dbReference type="ChEBI" id="CHEBI:29105"/>
        <note>catalytic</note>
    </ligand>
</feature>
<feature type="binding site" evidence="1">
    <location>
        <position position="669"/>
    </location>
    <ligand>
        <name>Zn(2+)</name>
        <dbReference type="ChEBI" id="CHEBI:29105"/>
        <note>catalytic</note>
    </ligand>
</feature>
<feature type="binding site" evidence="1">
    <location>
        <position position="730"/>
    </location>
    <ligand>
        <name>Zn(2+)</name>
        <dbReference type="ChEBI" id="CHEBI:29105"/>
        <note>catalytic</note>
    </ligand>
</feature>
<dbReference type="EC" id="2.1.1.14" evidence="1"/>
<dbReference type="EMBL" id="CP001069">
    <property type="protein sequence ID" value="ACD29632.1"/>
    <property type="molecule type" value="Genomic_DNA"/>
</dbReference>
<dbReference type="SMR" id="B2UJ81"/>
<dbReference type="STRING" id="402626.Rpic_4542"/>
<dbReference type="KEGG" id="rpi:Rpic_4542"/>
<dbReference type="eggNOG" id="COG0620">
    <property type="taxonomic scope" value="Bacteria"/>
</dbReference>
<dbReference type="HOGENOM" id="CLU_013175_0_0_4"/>
<dbReference type="UniPathway" id="UPA00051">
    <property type="reaction ID" value="UER00082"/>
</dbReference>
<dbReference type="GO" id="GO:0003871">
    <property type="term" value="F:5-methyltetrahydropteroyltriglutamate-homocysteine S-methyltransferase activity"/>
    <property type="evidence" value="ECO:0007669"/>
    <property type="project" value="UniProtKB-UniRule"/>
</dbReference>
<dbReference type="GO" id="GO:0008270">
    <property type="term" value="F:zinc ion binding"/>
    <property type="evidence" value="ECO:0007669"/>
    <property type="project" value="InterPro"/>
</dbReference>
<dbReference type="GO" id="GO:0009086">
    <property type="term" value="P:methionine biosynthetic process"/>
    <property type="evidence" value="ECO:0007669"/>
    <property type="project" value="UniProtKB-UniRule"/>
</dbReference>
<dbReference type="GO" id="GO:0032259">
    <property type="term" value="P:methylation"/>
    <property type="evidence" value="ECO:0007669"/>
    <property type="project" value="UniProtKB-KW"/>
</dbReference>
<dbReference type="CDD" id="cd03311">
    <property type="entry name" value="CIMS_C_terminal_like"/>
    <property type="match status" value="1"/>
</dbReference>
<dbReference type="CDD" id="cd03312">
    <property type="entry name" value="CIMS_N_terminal_like"/>
    <property type="match status" value="1"/>
</dbReference>
<dbReference type="FunFam" id="3.20.20.210:FF:000002">
    <property type="entry name" value="5-methyltetrahydropteroyltriglutamate--homocysteine methyltransferase"/>
    <property type="match status" value="1"/>
</dbReference>
<dbReference type="Gene3D" id="3.20.20.210">
    <property type="match status" value="2"/>
</dbReference>
<dbReference type="HAMAP" id="MF_00172">
    <property type="entry name" value="Meth_synth"/>
    <property type="match status" value="1"/>
</dbReference>
<dbReference type="InterPro" id="IPR013215">
    <property type="entry name" value="Cbl-indep_Met_Synth_N"/>
</dbReference>
<dbReference type="InterPro" id="IPR006276">
    <property type="entry name" value="Cobalamin-indep_Met_synthase"/>
</dbReference>
<dbReference type="InterPro" id="IPR002629">
    <property type="entry name" value="Met_Synth_C/arc"/>
</dbReference>
<dbReference type="InterPro" id="IPR038071">
    <property type="entry name" value="UROD/MetE-like_sf"/>
</dbReference>
<dbReference type="NCBIfam" id="TIGR01371">
    <property type="entry name" value="met_syn_B12ind"/>
    <property type="match status" value="1"/>
</dbReference>
<dbReference type="NCBIfam" id="NF003556">
    <property type="entry name" value="PRK05222.1"/>
    <property type="match status" value="1"/>
</dbReference>
<dbReference type="PANTHER" id="PTHR30519">
    <property type="entry name" value="5-METHYLTETRAHYDROPTEROYLTRIGLUTAMATE--HOMOCYSTEINE METHYLTRANSFERASE"/>
    <property type="match status" value="1"/>
</dbReference>
<dbReference type="Pfam" id="PF08267">
    <property type="entry name" value="Meth_synt_1"/>
    <property type="match status" value="1"/>
</dbReference>
<dbReference type="Pfam" id="PF01717">
    <property type="entry name" value="Meth_synt_2"/>
    <property type="match status" value="1"/>
</dbReference>
<dbReference type="PIRSF" id="PIRSF000382">
    <property type="entry name" value="MeTrfase_B12_ind"/>
    <property type="match status" value="1"/>
</dbReference>
<dbReference type="SUPFAM" id="SSF51726">
    <property type="entry name" value="UROD/MetE-like"/>
    <property type="match status" value="2"/>
</dbReference>